<feature type="initiator methionine" description="Removed" evidence="2">
    <location>
        <position position="1"/>
    </location>
</feature>
<feature type="chain" id="PRO_0000247576" description="Hemoglobin subunit alpha-2">
    <location>
        <begin position="2"/>
        <end position="143"/>
    </location>
</feature>
<feature type="domain" description="Globin" evidence="1">
    <location>
        <begin position="2"/>
        <end position="143"/>
    </location>
</feature>
<feature type="binding site" evidence="1">
    <location>
        <position position="60"/>
    </location>
    <ligand>
        <name>O2</name>
        <dbReference type="ChEBI" id="CHEBI:15379"/>
    </ligand>
</feature>
<feature type="binding site" description="proximal binding residue" evidence="1">
    <location>
        <position position="89"/>
    </location>
    <ligand>
        <name>heme b</name>
        <dbReference type="ChEBI" id="CHEBI:60344"/>
    </ligand>
    <ligandPart>
        <name>Fe</name>
        <dbReference type="ChEBI" id="CHEBI:18248"/>
    </ligandPart>
</feature>
<feature type="modified residue" description="N-acetylserine" evidence="2">
    <location>
        <position position="2"/>
    </location>
</feature>
<keyword id="KW-0007">Acetylation</keyword>
<keyword id="KW-0903">Direct protein sequencing</keyword>
<keyword id="KW-0349">Heme</keyword>
<keyword id="KW-0408">Iron</keyword>
<keyword id="KW-0479">Metal-binding</keyword>
<keyword id="KW-0561">Oxygen transport</keyword>
<keyword id="KW-0813">Transport</keyword>
<sequence>MSLSSKDKATVKLFWGRMSGKAELIGADALSRMLAVYPQTKIYFSHWKSLSPGSSEVKKHGKTIMMGIGDAVTKMEDLERGLLTLSELHAFKLRVDPTNFKLLSLNILVVMAIMFPEDFTPMAHLAVDKFLCALALALSEKYR</sequence>
<accession>Q1AGS4</accession>
<accession>P84603</accession>
<proteinExistence type="evidence at protein level"/>
<dbReference type="EMBL" id="DQ125475">
    <property type="protein sequence ID" value="AAZ99827.1"/>
    <property type="molecule type" value="mRNA"/>
</dbReference>
<dbReference type="SMR" id="Q1AGS4"/>
<dbReference type="iPTMnet" id="Q1AGS4"/>
<dbReference type="GO" id="GO:0072562">
    <property type="term" value="C:blood microparticle"/>
    <property type="evidence" value="ECO:0007669"/>
    <property type="project" value="TreeGrafter"/>
</dbReference>
<dbReference type="GO" id="GO:0031838">
    <property type="term" value="C:haptoglobin-hemoglobin complex"/>
    <property type="evidence" value="ECO:0007669"/>
    <property type="project" value="TreeGrafter"/>
</dbReference>
<dbReference type="GO" id="GO:0005833">
    <property type="term" value="C:hemoglobin complex"/>
    <property type="evidence" value="ECO:0007669"/>
    <property type="project" value="InterPro"/>
</dbReference>
<dbReference type="GO" id="GO:0031720">
    <property type="term" value="F:haptoglobin binding"/>
    <property type="evidence" value="ECO:0007669"/>
    <property type="project" value="TreeGrafter"/>
</dbReference>
<dbReference type="GO" id="GO:0020037">
    <property type="term" value="F:heme binding"/>
    <property type="evidence" value="ECO:0007669"/>
    <property type="project" value="InterPro"/>
</dbReference>
<dbReference type="GO" id="GO:0046872">
    <property type="term" value="F:metal ion binding"/>
    <property type="evidence" value="ECO:0007669"/>
    <property type="project" value="UniProtKB-KW"/>
</dbReference>
<dbReference type="GO" id="GO:0043177">
    <property type="term" value="F:organic acid binding"/>
    <property type="evidence" value="ECO:0007669"/>
    <property type="project" value="TreeGrafter"/>
</dbReference>
<dbReference type="GO" id="GO:0019825">
    <property type="term" value="F:oxygen binding"/>
    <property type="evidence" value="ECO:0007669"/>
    <property type="project" value="InterPro"/>
</dbReference>
<dbReference type="GO" id="GO:0005344">
    <property type="term" value="F:oxygen carrier activity"/>
    <property type="evidence" value="ECO:0007669"/>
    <property type="project" value="UniProtKB-KW"/>
</dbReference>
<dbReference type="GO" id="GO:0004601">
    <property type="term" value="F:peroxidase activity"/>
    <property type="evidence" value="ECO:0007669"/>
    <property type="project" value="TreeGrafter"/>
</dbReference>
<dbReference type="GO" id="GO:0042744">
    <property type="term" value="P:hydrogen peroxide catabolic process"/>
    <property type="evidence" value="ECO:0007669"/>
    <property type="project" value="TreeGrafter"/>
</dbReference>
<dbReference type="CDD" id="cd08927">
    <property type="entry name" value="Hb-alpha-like"/>
    <property type="match status" value="1"/>
</dbReference>
<dbReference type="FunFam" id="1.10.490.10:FF:000002">
    <property type="entry name" value="Hemoglobin subunit alpha"/>
    <property type="match status" value="1"/>
</dbReference>
<dbReference type="Gene3D" id="1.10.490.10">
    <property type="entry name" value="Globins"/>
    <property type="match status" value="1"/>
</dbReference>
<dbReference type="InterPro" id="IPR000971">
    <property type="entry name" value="Globin"/>
</dbReference>
<dbReference type="InterPro" id="IPR009050">
    <property type="entry name" value="Globin-like_sf"/>
</dbReference>
<dbReference type="InterPro" id="IPR012292">
    <property type="entry name" value="Globin/Proto"/>
</dbReference>
<dbReference type="InterPro" id="IPR002338">
    <property type="entry name" value="Hemoglobin_a-typ"/>
</dbReference>
<dbReference type="InterPro" id="IPR050056">
    <property type="entry name" value="Hemoglobin_oxygen_transport"/>
</dbReference>
<dbReference type="PANTHER" id="PTHR11442">
    <property type="entry name" value="HEMOGLOBIN FAMILY MEMBER"/>
    <property type="match status" value="1"/>
</dbReference>
<dbReference type="PANTHER" id="PTHR11442:SF41">
    <property type="entry name" value="HEMOGLOBIN SUBUNIT ZETA"/>
    <property type="match status" value="1"/>
</dbReference>
<dbReference type="Pfam" id="PF00042">
    <property type="entry name" value="Globin"/>
    <property type="match status" value="1"/>
</dbReference>
<dbReference type="PRINTS" id="PR00612">
    <property type="entry name" value="ALPHAHAEM"/>
</dbReference>
<dbReference type="SUPFAM" id="SSF46458">
    <property type="entry name" value="Globin-like"/>
    <property type="match status" value="1"/>
</dbReference>
<dbReference type="PROSITE" id="PS01033">
    <property type="entry name" value="GLOBIN"/>
    <property type="match status" value="1"/>
</dbReference>
<evidence type="ECO:0000255" key="1">
    <source>
        <dbReference type="PROSITE-ProRule" id="PRU00238"/>
    </source>
</evidence>
<evidence type="ECO:0000269" key="2">
    <source>
    </source>
</evidence>
<evidence type="ECO:0000305" key="3"/>
<evidence type="ECO:0000312" key="4">
    <source>
        <dbReference type="EMBL" id="AAZ99827.1"/>
    </source>
</evidence>
<organism>
    <name type="scientific">Arctogadus glacialis</name>
    <name type="common">Arctic cod</name>
    <dbReference type="NCBI Taxonomy" id="185735"/>
    <lineage>
        <taxon>Eukaryota</taxon>
        <taxon>Metazoa</taxon>
        <taxon>Chordata</taxon>
        <taxon>Craniata</taxon>
        <taxon>Vertebrata</taxon>
        <taxon>Euteleostomi</taxon>
        <taxon>Actinopterygii</taxon>
        <taxon>Neopterygii</taxon>
        <taxon>Teleostei</taxon>
        <taxon>Neoteleostei</taxon>
        <taxon>Acanthomorphata</taxon>
        <taxon>Zeiogadaria</taxon>
        <taxon>Gadariae</taxon>
        <taxon>Gadiformes</taxon>
        <taxon>Gadoidei</taxon>
        <taxon>Gadidae</taxon>
        <taxon>Arctogadus</taxon>
    </lineage>
</organism>
<comment type="function">
    <text evidence="2 3">Involved in oxygen transport from gills to the various peripheral tissues.</text>
</comment>
<comment type="subunit">
    <text evidence="2">Hb 2 is a heterotetramer of two alpha-2 and two beta-1 chains. Hb 3 is a heterotetramer of two alpha-2 and two beta-2 chains.</text>
</comment>
<comment type="tissue specificity">
    <text evidence="3">Red blood cells.</text>
</comment>
<comment type="miscellaneous">
    <text>Hb 3 displays a Bohr effect, which is enhanced by organophosphates, and a Root effect.</text>
</comment>
<comment type="similarity">
    <text evidence="1">Belongs to the globin family.</text>
</comment>
<gene>
    <name type="primary">hba2</name>
</gene>
<name>HBA2_ARCGL</name>
<reference evidence="3 4" key="1">
    <citation type="journal article" date="2006" name="J. Biol. Chem.">
        <title>The oxygen transport system in three species of the boreal fish family Gadidae. Molecular phylogeny of hemoglobin.</title>
        <authorList>
            <person name="Verde C."/>
            <person name="Balestrieri M."/>
            <person name="de Pascale D."/>
            <person name="Pagnozzi D."/>
            <person name="Lecointre G."/>
            <person name="di Prisco G."/>
        </authorList>
    </citation>
    <scope>PROTEIN SEQUENCE OF 2-143</scope>
    <scope>NUCLEOTIDE SEQUENCE [MRNA] OF 36-143</scope>
    <scope>FUNCTION</scope>
    <scope>SUBUNIT</scope>
    <scope>ACETYLATION AT SER-2</scope>
    <source>
        <tissue evidence="2">Blood</tissue>
        <tissue evidence="2">Spleen</tissue>
    </source>
</reference>
<protein>
    <recommendedName>
        <fullName>Hemoglobin subunit alpha-2</fullName>
    </recommendedName>
    <alternativeName>
        <fullName>Alpha-2-globin</fullName>
    </alternativeName>
    <alternativeName>
        <fullName>Hemoglobin alpha-2 chain</fullName>
    </alternativeName>
</protein>